<gene>
    <name evidence="1" type="primary">rplX</name>
    <name type="ordered locus">SP_0220</name>
</gene>
<evidence type="ECO:0000255" key="1">
    <source>
        <dbReference type="HAMAP-Rule" id="MF_01326"/>
    </source>
</evidence>
<evidence type="ECO:0000305" key="2"/>
<comment type="function">
    <text evidence="1">One of two assembly initiator proteins, it binds directly to the 5'-end of the 23S rRNA, where it nucleates assembly of the 50S subunit.</text>
</comment>
<comment type="function">
    <text evidence="1">One of the proteins that surrounds the polypeptide exit tunnel on the outside of the subunit.</text>
</comment>
<comment type="subunit">
    <text evidence="1">Part of the 50S ribosomal subunit.</text>
</comment>
<comment type="similarity">
    <text evidence="1">Belongs to the universal ribosomal protein uL24 family.</text>
</comment>
<proteinExistence type="inferred from homology"/>
<protein>
    <recommendedName>
        <fullName evidence="1">Large ribosomal subunit protein uL24</fullName>
    </recommendedName>
    <alternativeName>
        <fullName evidence="2">50S ribosomal protein L24</fullName>
    </alternativeName>
</protein>
<keyword id="KW-1185">Reference proteome</keyword>
<keyword id="KW-0687">Ribonucleoprotein</keyword>
<keyword id="KW-0689">Ribosomal protein</keyword>
<keyword id="KW-0694">RNA-binding</keyword>
<keyword id="KW-0699">rRNA-binding</keyword>
<name>RL24_STRPN</name>
<accession>P60629</accession>
<accession>Q9WVW6</accession>
<feature type="chain" id="PRO_0000130729" description="Large ribosomal subunit protein uL24">
    <location>
        <begin position="1"/>
        <end position="101"/>
    </location>
</feature>
<sequence>MFVKKGDKVRVIAGKDKGTEAVVLTALPKVNKVIVEGVNIVKKHQRPTNELPQGGIIEKEAAIHVSNVQVLDKNGVAGRVGYKFVDGKKVRYNKKSGEVLD</sequence>
<dbReference type="EMBL" id="AF126060">
    <property type="protein sequence ID" value="AAD33276.1"/>
    <property type="molecule type" value="Genomic_DNA"/>
</dbReference>
<dbReference type="EMBL" id="AF126061">
    <property type="protein sequence ID" value="AAD33285.1"/>
    <property type="molecule type" value="Genomic_DNA"/>
</dbReference>
<dbReference type="EMBL" id="AE005672">
    <property type="protein sequence ID" value="AAK74400.1"/>
    <property type="molecule type" value="Genomic_DNA"/>
</dbReference>
<dbReference type="PIR" id="G95025">
    <property type="entry name" value="G95025"/>
</dbReference>
<dbReference type="RefSeq" id="WP_000497691.1">
    <property type="nucleotide sequence ID" value="NZ_CP155539.1"/>
</dbReference>
<dbReference type="SMR" id="P60629"/>
<dbReference type="PaxDb" id="170187-SP_0220"/>
<dbReference type="EnsemblBacteria" id="AAK74400">
    <property type="protein sequence ID" value="AAK74400"/>
    <property type="gene ID" value="SP_0220"/>
</dbReference>
<dbReference type="GeneID" id="93738968"/>
<dbReference type="KEGG" id="spn:SP_0220"/>
<dbReference type="eggNOG" id="COG0198">
    <property type="taxonomic scope" value="Bacteria"/>
</dbReference>
<dbReference type="PhylomeDB" id="P60629"/>
<dbReference type="BioCyc" id="SPNE170187:G1FZB-225-MONOMER"/>
<dbReference type="Proteomes" id="UP000000585">
    <property type="component" value="Chromosome"/>
</dbReference>
<dbReference type="GO" id="GO:1990904">
    <property type="term" value="C:ribonucleoprotein complex"/>
    <property type="evidence" value="ECO:0007669"/>
    <property type="project" value="UniProtKB-KW"/>
</dbReference>
<dbReference type="GO" id="GO:0005840">
    <property type="term" value="C:ribosome"/>
    <property type="evidence" value="ECO:0007669"/>
    <property type="project" value="UniProtKB-KW"/>
</dbReference>
<dbReference type="GO" id="GO:0019843">
    <property type="term" value="F:rRNA binding"/>
    <property type="evidence" value="ECO:0007669"/>
    <property type="project" value="UniProtKB-UniRule"/>
</dbReference>
<dbReference type="GO" id="GO:0003735">
    <property type="term" value="F:structural constituent of ribosome"/>
    <property type="evidence" value="ECO:0007669"/>
    <property type="project" value="InterPro"/>
</dbReference>
<dbReference type="GO" id="GO:0006412">
    <property type="term" value="P:translation"/>
    <property type="evidence" value="ECO:0007669"/>
    <property type="project" value="UniProtKB-UniRule"/>
</dbReference>
<dbReference type="CDD" id="cd06089">
    <property type="entry name" value="KOW_RPL26"/>
    <property type="match status" value="1"/>
</dbReference>
<dbReference type="FunFam" id="2.30.30.30:FF:000004">
    <property type="entry name" value="50S ribosomal protein L24"/>
    <property type="match status" value="1"/>
</dbReference>
<dbReference type="Gene3D" id="2.30.30.30">
    <property type="match status" value="1"/>
</dbReference>
<dbReference type="HAMAP" id="MF_01326_B">
    <property type="entry name" value="Ribosomal_uL24_B"/>
    <property type="match status" value="1"/>
</dbReference>
<dbReference type="InterPro" id="IPR005824">
    <property type="entry name" value="KOW"/>
</dbReference>
<dbReference type="InterPro" id="IPR014722">
    <property type="entry name" value="Rib_uL2_dom2"/>
</dbReference>
<dbReference type="InterPro" id="IPR003256">
    <property type="entry name" value="Ribosomal_uL24"/>
</dbReference>
<dbReference type="InterPro" id="IPR005825">
    <property type="entry name" value="Ribosomal_uL24_CS"/>
</dbReference>
<dbReference type="InterPro" id="IPR041988">
    <property type="entry name" value="Ribosomal_uL24_KOW"/>
</dbReference>
<dbReference type="InterPro" id="IPR008991">
    <property type="entry name" value="Translation_prot_SH3-like_sf"/>
</dbReference>
<dbReference type="NCBIfam" id="TIGR01079">
    <property type="entry name" value="rplX_bact"/>
    <property type="match status" value="1"/>
</dbReference>
<dbReference type="PANTHER" id="PTHR12903">
    <property type="entry name" value="MITOCHONDRIAL RIBOSOMAL PROTEIN L24"/>
    <property type="match status" value="1"/>
</dbReference>
<dbReference type="Pfam" id="PF00467">
    <property type="entry name" value="KOW"/>
    <property type="match status" value="1"/>
</dbReference>
<dbReference type="Pfam" id="PF17136">
    <property type="entry name" value="ribosomal_L24"/>
    <property type="match status" value="1"/>
</dbReference>
<dbReference type="SMART" id="SM00739">
    <property type="entry name" value="KOW"/>
    <property type="match status" value="1"/>
</dbReference>
<dbReference type="SUPFAM" id="SSF50104">
    <property type="entry name" value="Translation proteins SH3-like domain"/>
    <property type="match status" value="1"/>
</dbReference>
<dbReference type="PROSITE" id="PS01108">
    <property type="entry name" value="RIBOSOMAL_L24"/>
    <property type="match status" value="1"/>
</dbReference>
<organism>
    <name type="scientific">Streptococcus pneumoniae serotype 4 (strain ATCC BAA-334 / TIGR4)</name>
    <dbReference type="NCBI Taxonomy" id="170187"/>
    <lineage>
        <taxon>Bacteria</taxon>
        <taxon>Bacillati</taxon>
        <taxon>Bacillota</taxon>
        <taxon>Bacilli</taxon>
        <taxon>Lactobacillales</taxon>
        <taxon>Streptococcaceae</taxon>
        <taxon>Streptococcus</taxon>
    </lineage>
</organism>
<reference key="1">
    <citation type="journal article" date="2000" name="Antimicrob. Agents Chemother.">
        <title>Mutations in ribosomal protein L16 conferring reduced susceptibility to evernimicin (SCH27899): implications for mechanism of action.</title>
        <authorList>
            <person name="Adrian P.V."/>
            <person name="Zhao W."/>
            <person name="Black T.A."/>
            <person name="Shaw K.J."/>
            <person name="Hare R.S."/>
            <person name="Klugman K.P."/>
        </authorList>
    </citation>
    <scope>NUCLEOTIDE SEQUENCE [GENOMIC DNA]</scope>
    <source>
        <strain>SP#5</strain>
        <strain>ZR1</strain>
    </source>
</reference>
<reference key="2">
    <citation type="journal article" date="2001" name="Science">
        <title>Complete genome sequence of a virulent isolate of Streptococcus pneumoniae.</title>
        <authorList>
            <person name="Tettelin H."/>
            <person name="Nelson K.E."/>
            <person name="Paulsen I.T."/>
            <person name="Eisen J.A."/>
            <person name="Read T.D."/>
            <person name="Peterson S.N."/>
            <person name="Heidelberg J.F."/>
            <person name="DeBoy R.T."/>
            <person name="Haft D.H."/>
            <person name="Dodson R.J."/>
            <person name="Durkin A.S."/>
            <person name="Gwinn M.L."/>
            <person name="Kolonay J.F."/>
            <person name="Nelson W.C."/>
            <person name="Peterson J.D."/>
            <person name="Umayam L.A."/>
            <person name="White O."/>
            <person name="Salzberg S.L."/>
            <person name="Lewis M.R."/>
            <person name="Radune D."/>
            <person name="Holtzapple E.K."/>
            <person name="Khouri H.M."/>
            <person name="Wolf A.M."/>
            <person name="Utterback T.R."/>
            <person name="Hansen C.L."/>
            <person name="McDonald L.A."/>
            <person name="Feldblyum T.V."/>
            <person name="Angiuoli S.V."/>
            <person name="Dickinson T."/>
            <person name="Hickey E.K."/>
            <person name="Holt I.E."/>
            <person name="Loftus B.J."/>
            <person name="Yang F."/>
            <person name="Smith H.O."/>
            <person name="Venter J.C."/>
            <person name="Dougherty B.A."/>
            <person name="Morrison D.A."/>
            <person name="Hollingshead S.K."/>
            <person name="Fraser C.M."/>
        </authorList>
    </citation>
    <scope>NUCLEOTIDE SEQUENCE [LARGE SCALE GENOMIC DNA]</scope>
    <source>
        <strain>ATCC BAA-334 / TIGR4</strain>
    </source>
</reference>